<name>MURI_STRT1</name>
<accession>Q5M1I5</accession>
<proteinExistence type="inferred from homology"/>
<organism>
    <name type="scientific">Streptococcus thermophilus (strain CNRZ 1066)</name>
    <dbReference type="NCBI Taxonomy" id="299768"/>
    <lineage>
        <taxon>Bacteria</taxon>
        <taxon>Bacillati</taxon>
        <taxon>Bacillota</taxon>
        <taxon>Bacilli</taxon>
        <taxon>Lactobacillales</taxon>
        <taxon>Streptococcaceae</taxon>
        <taxon>Streptococcus</taxon>
    </lineage>
</organism>
<feature type="chain" id="PRO_1000047631" description="Glutamate racemase">
    <location>
        <begin position="1"/>
        <end position="271"/>
    </location>
</feature>
<feature type="active site" description="Proton donor/acceptor" evidence="1">
    <location>
        <position position="73"/>
    </location>
</feature>
<feature type="active site" description="Proton donor/acceptor" evidence="1">
    <location>
        <position position="183"/>
    </location>
</feature>
<feature type="binding site" evidence="1">
    <location>
        <begin position="10"/>
        <end position="11"/>
    </location>
    <ligand>
        <name>substrate</name>
    </ligand>
</feature>
<feature type="binding site" evidence="1">
    <location>
        <begin position="42"/>
        <end position="43"/>
    </location>
    <ligand>
        <name>substrate</name>
    </ligand>
</feature>
<feature type="binding site" evidence="1">
    <location>
        <begin position="74"/>
        <end position="75"/>
    </location>
    <ligand>
        <name>substrate</name>
    </ligand>
</feature>
<feature type="binding site" evidence="1">
    <location>
        <begin position="184"/>
        <end position="185"/>
    </location>
    <ligand>
        <name>substrate</name>
    </ligand>
</feature>
<sequence length="271" mass="30033">MDNRPIGFLDSGVGGLTVVRELKRQLPHESIVYIGDSARAPYGPRPAGQIREYTWQLVKFLLTKDVKMIVIACNTATAVVWEEIKESLDIPVLGVVLPGSSAAIKSSRSGQIGVIGTPMTISSNIYEQKIKRLAPQMNVLSLSCPRFAPIVESNEINSSVAKKIVYESMAPLVDRVDTLVLGCTHYPLLRPIIQNVMGLSVKLIDSGAETVRDVSVLLNYFEINRSREVKDKTEEYYTTASVLGFKEIAEQWLGEEVTVQHVDLDKELEND</sequence>
<comment type="function">
    <text evidence="1">Provides the (R)-glutamate required for cell wall biosynthesis.</text>
</comment>
<comment type="catalytic activity">
    <reaction evidence="1">
        <text>L-glutamate = D-glutamate</text>
        <dbReference type="Rhea" id="RHEA:12813"/>
        <dbReference type="ChEBI" id="CHEBI:29985"/>
        <dbReference type="ChEBI" id="CHEBI:29986"/>
        <dbReference type="EC" id="5.1.1.3"/>
    </reaction>
</comment>
<comment type="pathway">
    <text evidence="1">Cell wall biogenesis; peptidoglycan biosynthesis.</text>
</comment>
<comment type="similarity">
    <text evidence="1">Belongs to the aspartate/glutamate racemases family.</text>
</comment>
<dbReference type="EC" id="5.1.1.3" evidence="1"/>
<dbReference type="EMBL" id="CP000024">
    <property type="protein sequence ID" value="AAV61868.1"/>
    <property type="molecule type" value="Genomic_DNA"/>
</dbReference>
<dbReference type="SMR" id="Q5M1I5"/>
<dbReference type="KEGG" id="stc:str0255"/>
<dbReference type="HOGENOM" id="CLU_052344_0_2_9"/>
<dbReference type="UniPathway" id="UPA00219"/>
<dbReference type="GO" id="GO:0008881">
    <property type="term" value="F:glutamate racemase activity"/>
    <property type="evidence" value="ECO:0007669"/>
    <property type="project" value="UniProtKB-UniRule"/>
</dbReference>
<dbReference type="GO" id="GO:0071555">
    <property type="term" value="P:cell wall organization"/>
    <property type="evidence" value="ECO:0007669"/>
    <property type="project" value="UniProtKB-KW"/>
</dbReference>
<dbReference type="GO" id="GO:0009252">
    <property type="term" value="P:peptidoglycan biosynthetic process"/>
    <property type="evidence" value="ECO:0007669"/>
    <property type="project" value="UniProtKB-UniRule"/>
</dbReference>
<dbReference type="GO" id="GO:0008360">
    <property type="term" value="P:regulation of cell shape"/>
    <property type="evidence" value="ECO:0007669"/>
    <property type="project" value="UniProtKB-KW"/>
</dbReference>
<dbReference type="FunFam" id="3.40.50.1860:FF:000002">
    <property type="entry name" value="Glutamate racemase"/>
    <property type="match status" value="1"/>
</dbReference>
<dbReference type="Gene3D" id="3.40.50.1860">
    <property type="match status" value="2"/>
</dbReference>
<dbReference type="HAMAP" id="MF_00258">
    <property type="entry name" value="Glu_racemase"/>
    <property type="match status" value="1"/>
</dbReference>
<dbReference type="InterPro" id="IPR015942">
    <property type="entry name" value="Asp/Glu/hydantoin_racemase"/>
</dbReference>
<dbReference type="InterPro" id="IPR001920">
    <property type="entry name" value="Asp/Glu_race"/>
</dbReference>
<dbReference type="InterPro" id="IPR018187">
    <property type="entry name" value="Asp/Glu_racemase_AS_1"/>
</dbReference>
<dbReference type="InterPro" id="IPR033134">
    <property type="entry name" value="Asp/Glu_racemase_AS_2"/>
</dbReference>
<dbReference type="InterPro" id="IPR004391">
    <property type="entry name" value="Glu_race"/>
</dbReference>
<dbReference type="NCBIfam" id="TIGR00067">
    <property type="entry name" value="glut_race"/>
    <property type="match status" value="1"/>
</dbReference>
<dbReference type="NCBIfam" id="NF002035">
    <property type="entry name" value="PRK00865.1-3"/>
    <property type="match status" value="1"/>
</dbReference>
<dbReference type="PANTHER" id="PTHR21198">
    <property type="entry name" value="GLUTAMATE RACEMASE"/>
    <property type="match status" value="1"/>
</dbReference>
<dbReference type="PANTHER" id="PTHR21198:SF2">
    <property type="entry name" value="GLUTAMATE RACEMASE"/>
    <property type="match status" value="1"/>
</dbReference>
<dbReference type="Pfam" id="PF01177">
    <property type="entry name" value="Asp_Glu_race"/>
    <property type="match status" value="1"/>
</dbReference>
<dbReference type="SUPFAM" id="SSF53681">
    <property type="entry name" value="Aspartate/glutamate racemase"/>
    <property type="match status" value="2"/>
</dbReference>
<dbReference type="PROSITE" id="PS00923">
    <property type="entry name" value="ASP_GLU_RACEMASE_1"/>
    <property type="match status" value="1"/>
</dbReference>
<dbReference type="PROSITE" id="PS00924">
    <property type="entry name" value="ASP_GLU_RACEMASE_2"/>
    <property type="match status" value="1"/>
</dbReference>
<protein>
    <recommendedName>
        <fullName evidence="1">Glutamate racemase</fullName>
        <ecNumber evidence="1">5.1.1.3</ecNumber>
    </recommendedName>
</protein>
<evidence type="ECO:0000255" key="1">
    <source>
        <dbReference type="HAMAP-Rule" id="MF_00258"/>
    </source>
</evidence>
<reference key="1">
    <citation type="journal article" date="2004" name="Nat. Biotechnol.">
        <title>Complete sequence and comparative genome analysis of the dairy bacterium Streptococcus thermophilus.</title>
        <authorList>
            <person name="Bolotin A."/>
            <person name="Quinquis B."/>
            <person name="Renault P."/>
            <person name="Sorokin A."/>
            <person name="Ehrlich S.D."/>
            <person name="Kulakauskas S."/>
            <person name="Lapidus A."/>
            <person name="Goltsman E."/>
            <person name="Mazur M."/>
            <person name="Pusch G.D."/>
            <person name="Fonstein M."/>
            <person name="Overbeek R."/>
            <person name="Kyprides N."/>
            <person name="Purnelle B."/>
            <person name="Prozzi D."/>
            <person name="Ngui K."/>
            <person name="Masuy D."/>
            <person name="Hancy F."/>
            <person name="Burteau S."/>
            <person name="Boutry M."/>
            <person name="Delcour J."/>
            <person name="Goffeau A."/>
            <person name="Hols P."/>
        </authorList>
    </citation>
    <scope>NUCLEOTIDE SEQUENCE [LARGE SCALE GENOMIC DNA]</scope>
    <source>
        <strain>CNRZ 1066</strain>
    </source>
</reference>
<keyword id="KW-0133">Cell shape</keyword>
<keyword id="KW-0961">Cell wall biogenesis/degradation</keyword>
<keyword id="KW-0413">Isomerase</keyword>
<keyword id="KW-0573">Peptidoglycan synthesis</keyword>
<gene>
    <name evidence="1" type="primary">murI</name>
    <name type="ordered locus">str0255</name>
</gene>